<feature type="chain" id="PRO_0000362676" description="NADH-quinone oxidoreductase subunit A">
    <location>
        <begin position="1"/>
        <end position="146"/>
    </location>
</feature>
<feature type="transmembrane region" description="Helical" evidence="1">
    <location>
        <begin position="14"/>
        <end position="34"/>
    </location>
</feature>
<feature type="transmembrane region" description="Helical" evidence="1">
    <location>
        <begin position="68"/>
        <end position="88"/>
    </location>
</feature>
<feature type="transmembrane region" description="Helical" evidence="1">
    <location>
        <begin position="96"/>
        <end position="116"/>
    </location>
</feature>
<evidence type="ECO:0000255" key="1">
    <source>
        <dbReference type="HAMAP-Rule" id="MF_01394"/>
    </source>
</evidence>
<keyword id="KW-0997">Cell inner membrane</keyword>
<keyword id="KW-1003">Cell membrane</keyword>
<keyword id="KW-0472">Membrane</keyword>
<keyword id="KW-0520">NAD</keyword>
<keyword id="KW-0874">Quinone</keyword>
<keyword id="KW-1185">Reference proteome</keyword>
<keyword id="KW-1278">Translocase</keyword>
<keyword id="KW-0812">Transmembrane</keyword>
<keyword id="KW-1133">Transmembrane helix</keyword>
<keyword id="KW-0813">Transport</keyword>
<keyword id="KW-0830">Ubiquinone</keyword>
<organism>
    <name type="scientific">Pectobacterium atrosepticum (strain SCRI 1043 / ATCC BAA-672)</name>
    <name type="common">Erwinia carotovora subsp. atroseptica</name>
    <dbReference type="NCBI Taxonomy" id="218491"/>
    <lineage>
        <taxon>Bacteria</taxon>
        <taxon>Pseudomonadati</taxon>
        <taxon>Pseudomonadota</taxon>
        <taxon>Gammaproteobacteria</taxon>
        <taxon>Enterobacterales</taxon>
        <taxon>Pectobacteriaceae</taxon>
        <taxon>Pectobacterium</taxon>
    </lineage>
</organism>
<gene>
    <name evidence="1" type="primary">nuoA</name>
    <name type="ordered locus">ECA3028</name>
</gene>
<comment type="function">
    <text evidence="1">NDH-1 shuttles electrons from NADH, via FMN and iron-sulfur (Fe-S) centers, to quinones in the respiratory chain. The immediate electron acceptor for the enzyme in this species is believed to be ubiquinone. Couples the redox reaction to proton translocation (for every two electrons transferred, four hydrogen ions are translocated across the cytoplasmic membrane), and thus conserves the redox energy in a proton gradient.</text>
</comment>
<comment type="catalytic activity">
    <reaction evidence="1">
        <text>a quinone + NADH + 5 H(+)(in) = a quinol + NAD(+) + 4 H(+)(out)</text>
        <dbReference type="Rhea" id="RHEA:57888"/>
        <dbReference type="ChEBI" id="CHEBI:15378"/>
        <dbReference type="ChEBI" id="CHEBI:24646"/>
        <dbReference type="ChEBI" id="CHEBI:57540"/>
        <dbReference type="ChEBI" id="CHEBI:57945"/>
        <dbReference type="ChEBI" id="CHEBI:132124"/>
    </reaction>
</comment>
<comment type="subunit">
    <text evidence="1">NDH-1 is composed of 13 different subunits. Subunits NuoA, H, J, K, L, M, N constitute the membrane sector of the complex.</text>
</comment>
<comment type="subcellular location">
    <subcellularLocation>
        <location evidence="1">Cell inner membrane</location>
        <topology evidence="1">Multi-pass membrane protein</topology>
    </subcellularLocation>
</comment>
<comment type="similarity">
    <text evidence="1">Belongs to the complex I subunit 3 family.</text>
</comment>
<sequence>MSTTTEILAHHWAFALFLIIAIGLCVFMLTGGFLLGGRAKGRAKNVPYESGIDSVGSARLRLSAKFYLVAMFFVIFDVEALYLYAWAVSIKESGWIGFIEATIFILVLLAGLIYLVRVGALDWTPVRSKRQVVKSDIINTTNTHPQ</sequence>
<proteinExistence type="inferred from homology"/>
<dbReference type="EC" id="7.1.1.-" evidence="1"/>
<dbReference type="EMBL" id="BX950851">
    <property type="protein sequence ID" value="CAG75927.1"/>
    <property type="molecule type" value="Genomic_DNA"/>
</dbReference>
<dbReference type="RefSeq" id="WP_011094555.1">
    <property type="nucleotide sequence ID" value="NC_004547.2"/>
</dbReference>
<dbReference type="SMR" id="Q6D2R7"/>
<dbReference type="STRING" id="218491.ECA3028"/>
<dbReference type="KEGG" id="eca:ECA3028"/>
<dbReference type="eggNOG" id="COG0838">
    <property type="taxonomic scope" value="Bacteria"/>
</dbReference>
<dbReference type="HOGENOM" id="CLU_119549_2_1_6"/>
<dbReference type="OrthoDB" id="9791970at2"/>
<dbReference type="Proteomes" id="UP000007966">
    <property type="component" value="Chromosome"/>
</dbReference>
<dbReference type="GO" id="GO:0030964">
    <property type="term" value="C:NADH dehydrogenase complex"/>
    <property type="evidence" value="ECO:0007669"/>
    <property type="project" value="TreeGrafter"/>
</dbReference>
<dbReference type="GO" id="GO:0005886">
    <property type="term" value="C:plasma membrane"/>
    <property type="evidence" value="ECO:0007669"/>
    <property type="project" value="UniProtKB-SubCell"/>
</dbReference>
<dbReference type="GO" id="GO:0008137">
    <property type="term" value="F:NADH dehydrogenase (ubiquinone) activity"/>
    <property type="evidence" value="ECO:0007669"/>
    <property type="project" value="InterPro"/>
</dbReference>
<dbReference type="GO" id="GO:0050136">
    <property type="term" value="F:NADH:ubiquinone reductase (non-electrogenic) activity"/>
    <property type="evidence" value="ECO:0007669"/>
    <property type="project" value="UniProtKB-UniRule"/>
</dbReference>
<dbReference type="GO" id="GO:0048038">
    <property type="term" value="F:quinone binding"/>
    <property type="evidence" value="ECO:0007669"/>
    <property type="project" value="UniProtKB-KW"/>
</dbReference>
<dbReference type="FunFam" id="1.20.58.1610:FF:000003">
    <property type="entry name" value="NADH-quinone oxidoreductase subunit A"/>
    <property type="match status" value="1"/>
</dbReference>
<dbReference type="Gene3D" id="1.20.58.1610">
    <property type="entry name" value="NADH:ubiquinone/plastoquinone oxidoreductase, chain 3"/>
    <property type="match status" value="1"/>
</dbReference>
<dbReference type="HAMAP" id="MF_01394">
    <property type="entry name" value="NDH1_NuoA"/>
    <property type="match status" value="1"/>
</dbReference>
<dbReference type="InterPro" id="IPR023043">
    <property type="entry name" value="NAD(P)H_OxRDtase_bac/plastid"/>
</dbReference>
<dbReference type="InterPro" id="IPR000440">
    <property type="entry name" value="NADH_UbQ/plastoQ_OxRdtase_su3"/>
</dbReference>
<dbReference type="InterPro" id="IPR038430">
    <property type="entry name" value="NDAH_ubi_oxred_su3_sf"/>
</dbReference>
<dbReference type="PANTHER" id="PTHR11058:SF21">
    <property type="entry name" value="NADH-QUINONE OXIDOREDUCTASE SUBUNIT A"/>
    <property type="match status" value="1"/>
</dbReference>
<dbReference type="PANTHER" id="PTHR11058">
    <property type="entry name" value="NADH-UBIQUINONE OXIDOREDUCTASE CHAIN 3"/>
    <property type="match status" value="1"/>
</dbReference>
<dbReference type="Pfam" id="PF00507">
    <property type="entry name" value="Oxidored_q4"/>
    <property type="match status" value="1"/>
</dbReference>
<accession>Q6D2R7</accession>
<name>NUOA_PECAS</name>
<reference key="1">
    <citation type="journal article" date="2004" name="Proc. Natl. Acad. Sci. U.S.A.">
        <title>Genome sequence of the enterobacterial phytopathogen Erwinia carotovora subsp. atroseptica and characterization of virulence factors.</title>
        <authorList>
            <person name="Bell K.S."/>
            <person name="Sebaihia M."/>
            <person name="Pritchard L."/>
            <person name="Holden M.T.G."/>
            <person name="Hyman L.J."/>
            <person name="Holeva M.C."/>
            <person name="Thomson N.R."/>
            <person name="Bentley S.D."/>
            <person name="Churcher L.J.C."/>
            <person name="Mungall K."/>
            <person name="Atkin R."/>
            <person name="Bason N."/>
            <person name="Brooks K."/>
            <person name="Chillingworth T."/>
            <person name="Clark K."/>
            <person name="Doggett J."/>
            <person name="Fraser A."/>
            <person name="Hance Z."/>
            <person name="Hauser H."/>
            <person name="Jagels K."/>
            <person name="Moule S."/>
            <person name="Norbertczak H."/>
            <person name="Ormond D."/>
            <person name="Price C."/>
            <person name="Quail M.A."/>
            <person name="Sanders M."/>
            <person name="Walker D."/>
            <person name="Whitehead S."/>
            <person name="Salmond G.P.C."/>
            <person name="Birch P.R.J."/>
            <person name="Parkhill J."/>
            <person name="Toth I.K."/>
        </authorList>
    </citation>
    <scope>NUCLEOTIDE SEQUENCE [LARGE SCALE GENOMIC DNA]</scope>
    <source>
        <strain>SCRI 1043 / ATCC BAA-672</strain>
    </source>
</reference>
<protein>
    <recommendedName>
        <fullName evidence="1">NADH-quinone oxidoreductase subunit A</fullName>
        <ecNumber evidence="1">7.1.1.-</ecNumber>
    </recommendedName>
    <alternativeName>
        <fullName evidence="1">NADH dehydrogenase I subunit A</fullName>
    </alternativeName>
    <alternativeName>
        <fullName evidence="1">NDH-1 subunit A</fullName>
    </alternativeName>
    <alternativeName>
        <fullName evidence="1">NUO1</fullName>
    </alternativeName>
</protein>